<sequence length="228" mass="25844">MVMRNPSALLLEQFPWQETLQWQPTPQQQEQFQRFYGALLAANQGMNLTRITAVPDFWEKHLWDSLRGILPWLQPTGETLWGAKIQQVIDIGSGGGFPGVPVAIARPDWSVTLLEATQKKVKFLHSLGSAVGLANIYPEWGRAESHGRRYDLALIRAVGDVARCCAYGLPLLRSGGILVLYRGQWSDEDTQHLETLLPRYRSRRLDIQGFTTPLSHAQRHCVYLQRQG</sequence>
<proteinExistence type="inferred from homology"/>
<name>RSMG_THEVB</name>
<dbReference type="EC" id="2.1.1.-" evidence="1"/>
<dbReference type="EMBL" id="BA000039">
    <property type="protein sequence ID" value="BAC09256.1"/>
    <property type="molecule type" value="Genomic_DNA"/>
</dbReference>
<dbReference type="RefSeq" id="NP_682494.1">
    <property type="nucleotide sequence ID" value="NC_004113.1"/>
</dbReference>
<dbReference type="SMR" id="Q8DI86"/>
<dbReference type="STRING" id="197221.gene:10748308"/>
<dbReference type="EnsemblBacteria" id="BAC09256">
    <property type="protein sequence ID" value="BAC09256"/>
    <property type="gene ID" value="BAC09256"/>
</dbReference>
<dbReference type="KEGG" id="tel:tll1704"/>
<dbReference type="PATRIC" id="fig|197221.4.peg.1785"/>
<dbReference type="eggNOG" id="COG0357">
    <property type="taxonomic scope" value="Bacteria"/>
</dbReference>
<dbReference type="Proteomes" id="UP000000440">
    <property type="component" value="Chromosome"/>
</dbReference>
<dbReference type="GO" id="GO:0005829">
    <property type="term" value="C:cytosol"/>
    <property type="evidence" value="ECO:0007669"/>
    <property type="project" value="TreeGrafter"/>
</dbReference>
<dbReference type="GO" id="GO:0070043">
    <property type="term" value="F:rRNA (guanine-N7-)-methyltransferase activity"/>
    <property type="evidence" value="ECO:0007669"/>
    <property type="project" value="UniProtKB-UniRule"/>
</dbReference>
<dbReference type="Gene3D" id="3.40.50.150">
    <property type="entry name" value="Vaccinia Virus protein VP39"/>
    <property type="match status" value="1"/>
</dbReference>
<dbReference type="HAMAP" id="MF_00074">
    <property type="entry name" value="16SrRNA_methyltr_G"/>
    <property type="match status" value="1"/>
</dbReference>
<dbReference type="InterPro" id="IPR003682">
    <property type="entry name" value="rRNA_ssu_MeTfrase_G"/>
</dbReference>
<dbReference type="InterPro" id="IPR029063">
    <property type="entry name" value="SAM-dependent_MTases_sf"/>
</dbReference>
<dbReference type="NCBIfam" id="TIGR00138">
    <property type="entry name" value="rsmG_gidB"/>
    <property type="match status" value="1"/>
</dbReference>
<dbReference type="PANTHER" id="PTHR31760">
    <property type="entry name" value="S-ADENOSYL-L-METHIONINE-DEPENDENT METHYLTRANSFERASES SUPERFAMILY PROTEIN"/>
    <property type="match status" value="1"/>
</dbReference>
<dbReference type="PANTHER" id="PTHR31760:SF0">
    <property type="entry name" value="S-ADENOSYL-L-METHIONINE-DEPENDENT METHYLTRANSFERASES SUPERFAMILY PROTEIN"/>
    <property type="match status" value="1"/>
</dbReference>
<dbReference type="Pfam" id="PF02527">
    <property type="entry name" value="GidB"/>
    <property type="match status" value="1"/>
</dbReference>
<dbReference type="SUPFAM" id="SSF53335">
    <property type="entry name" value="S-adenosyl-L-methionine-dependent methyltransferases"/>
    <property type="match status" value="1"/>
</dbReference>
<comment type="function">
    <text evidence="1">Specifically methylates the N7 position of a guanine in 16S rRNA.</text>
</comment>
<comment type="subcellular location">
    <subcellularLocation>
        <location evidence="1">Cytoplasm</location>
    </subcellularLocation>
</comment>
<comment type="similarity">
    <text evidence="1">Belongs to the methyltransferase superfamily. RNA methyltransferase RsmG family.</text>
</comment>
<keyword id="KW-0963">Cytoplasm</keyword>
<keyword id="KW-0489">Methyltransferase</keyword>
<keyword id="KW-1185">Reference proteome</keyword>
<keyword id="KW-0698">rRNA processing</keyword>
<keyword id="KW-0949">S-adenosyl-L-methionine</keyword>
<keyword id="KW-0808">Transferase</keyword>
<gene>
    <name evidence="1" type="primary">rsmG</name>
    <name type="ordered locus">tll1704</name>
</gene>
<feature type="chain" id="PRO_0000184351" description="Ribosomal RNA small subunit methyltransferase G">
    <location>
        <begin position="1"/>
        <end position="228"/>
    </location>
</feature>
<feature type="binding site" evidence="1">
    <location>
        <position position="92"/>
    </location>
    <ligand>
        <name>S-adenosyl-L-methionine</name>
        <dbReference type="ChEBI" id="CHEBI:59789"/>
    </ligand>
</feature>
<feature type="binding site" evidence="1">
    <location>
        <position position="97"/>
    </location>
    <ligand>
        <name>S-adenosyl-L-methionine</name>
        <dbReference type="ChEBI" id="CHEBI:59789"/>
    </ligand>
</feature>
<feature type="binding site" evidence="1">
    <location>
        <begin position="115"/>
        <end position="117"/>
    </location>
    <ligand>
        <name>S-adenosyl-L-methionine</name>
        <dbReference type="ChEBI" id="CHEBI:59789"/>
    </ligand>
</feature>
<feature type="binding site" evidence="1">
    <location>
        <begin position="143"/>
        <end position="144"/>
    </location>
    <ligand>
        <name>S-adenosyl-L-methionine</name>
        <dbReference type="ChEBI" id="CHEBI:59789"/>
    </ligand>
</feature>
<feature type="binding site" evidence="1">
    <location>
        <position position="156"/>
    </location>
    <ligand>
        <name>S-adenosyl-L-methionine</name>
        <dbReference type="ChEBI" id="CHEBI:59789"/>
    </ligand>
</feature>
<reference key="1">
    <citation type="journal article" date="2002" name="DNA Res.">
        <title>Complete genome structure of the thermophilic cyanobacterium Thermosynechococcus elongatus BP-1.</title>
        <authorList>
            <person name="Nakamura Y."/>
            <person name="Kaneko T."/>
            <person name="Sato S."/>
            <person name="Ikeuchi M."/>
            <person name="Katoh H."/>
            <person name="Sasamoto S."/>
            <person name="Watanabe A."/>
            <person name="Iriguchi M."/>
            <person name="Kawashima K."/>
            <person name="Kimura T."/>
            <person name="Kishida Y."/>
            <person name="Kiyokawa C."/>
            <person name="Kohara M."/>
            <person name="Matsumoto M."/>
            <person name="Matsuno A."/>
            <person name="Nakazaki N."/>
            <person name="Shimpo S."/>
            <person name="Sugimoto M."/>
            <person name="Takeuchi C."/>
            <person name="Yamada M."/>
            <person name="Tabata S."/>
        </authorList>
    </citation>
    <scope>NUCLEOTIDE SEQUENCE [LARGE SCALE GENOMIC DNA]</scope>
    <source>
        <strain>NIES-2133 / IAM M-273 / BP-1</strain>
    </source>
</reference>
<accession>Q8DI86</accession>
<protein>
    <recommendedName>
        <fullName evidence="1">Ribosomal RNA small subunit methyltransferase G</fullName>
        <ecNumber evidence="1">2.1.1.-</ecNumber>
    </recommendedName>
    <alternativeName>
        <fullName evidence="1">16S rRNA 7-methylguanosine methyltransferase</fullName>
        <shortName evidence="1">16S rRNA m7G methyltransferase</shortName>
    </alternativeName>
</protein>
<organism>
    <name type="scientific">Thermosynechococcus vestitus (strain NIES-2133 / IAM M-273 / BP-1)</name>
    <dbReference type="NCBI Taxonomy" id="197221"/>
    <lineage>
        <taxon>Bacteria</taxon>
        <taxon>Bacillati</taxon>
        <taxon>Cyanobacteriota</taxon>
        <taxon>Cyanophyceae</taxon>
        <taxon>Acaryochloridales</taxon>
        <taxon>Thermosynechococcaceae</taxon>
        <taxon>Thermosynechococcus</taxon>
    </lineage>
</organism>
<evidence type="ECO:0000255" key="1">
    <source>
        <dbReference type="HAMAP-Rule" id="MF_00074"/>
    </source>
</evidence>